<evidence type="ECO:0000255" key="1">
    <source>
        <dbReference type="HAMAP-Rule" id="MF_00204"/>
    </source>
</evidence>
<evidence type="ECO:0000256" key="2">
    <source>
        <dbReference type="SAM" id="MobiDB-lite"/>
    </source>
</evidence>
<reference key="1">
    <citation type="journal article" date="2008" name="J. Bacteriol.">
        <title>Genome sequence of a nephritogenic and highly transformable M49 strain of Streptococcus pyogenes.</title>
        <authorList>
            <person name="McShan W.M."/>
            <person name="Ferretti J.J."/>
            <person name="Karasawa T."/>
            <person name="Suvorov A.N."/>
            <person name="Lin S."/>
            <person name="Qin B."/>
            <person name="Jia H."/>
            <person name="Kenton S."/>
            <person name="Najar F."/>
            <person name="Wu H."/>
            <person name="Scott J."/>
            <person name="Roe B.A."/>
            <person name="Savic D.J."/>
        </authorList>
    </citation>
    <scope>NUCLEOTIDE SEQUENCE [LARGE SCALE GENOMIC DNA]</scope>
    <source>
        <strain>NZ131</strain>
    </source>
</reference>
<sequence length="663" mass="75655">MIDKRDDKPFKLKSKYKPSGDQPQAIESLVDNIEGGEKAQILLGATGTGKTYTMSQVISKVNKPTLVIAHNKTLAGQLYGEFKEFFPDNAVEYFVSYYDYYQPEAYVPSSDTYIEKDSSVNDEIDKLRHSATSSLLERNDVIVVASVSCIYGLGSPKEYADSAVSLRPGQEISRDTLLNQLVDIQFERNDIDFQRGCFRVRGDVVEVFPASRDEHAFRVEFFGDEIDRICEIESLTGKTIGEVDHLVLFPATHFVTNDEHMEQSIAKIQAELAEQLQLFESEGKLLEAQRLRQRTEYDIEMLREMGYTSGVENYSRHMDGRSPGEPPYTLLDFFPEDFLIMIDESHMTMGQIKGMYNGDQARKQMLVDYGFRLPSALDNRPLRREEFESHVHQIVYVSATPGEYEMSQTNTIIEQIIRPTGLLDPEIDVRSSMGQMDDLLGEINQRVARDERTFITTLTKKMAEDLTDYLKEMGVKVKYMHSDIKTLERTEIIRDLRLGVFDVLIGINLLREGIDVPEVSLVAILDADKEGFLRNERGLIQTIGRAARNVDGHVIMYADKMTDSMQRAIDETARRREIQIAYNKAHGIVPQTIKKDIRGLISISKTSHNDISKEEMDYESMSRGERKEAINALQKQMQEAAELLDFELAAQMRDLILELKLMD</sequence>
<dbReference type="EMBL" id="CP000829">
    <property type="protein sequence ID" value="ACI61339.1"/>
    <property type="molecule type" value="Genomic_DNA"/>
</dbReference>
<dbReference type="SMR" id="B5XLX7"/>
<dbReference type="KEGG" id="soz:Spy49_1039c"/>
<dbReference type="HOGENOM" id="CLU_009621_2_1_9"/>
<dbReference type="Proteomes" id="UP000001039">
    <property type="component" value="Chromosome"/>
</dbReference>
<dbReference type="GO" id="GO:0005737">
    <property type="term" value="C:cytoplasm"/>
    <property type="evidence" value="ECO:0007669"/>
    <property type="project" value="UniProtKB-SubCell"/>
</dbReference>
<dbReference type="GO" id="GO:0009380">
    <property type="term" value="C:excinuclease repair complex"/>
    <property type="evidence" value="ECO:0007669"/>
    <property type="project" value="InterPro"/>
</dbReference>
<dbReference type="GO" id="GO:0005524">
    <property type="term" value="F:ATP binding"/>
    <property type="evidence" value="ECO:0007669"/>
    <property type="project" value="UniProtKB-UniRule"/>
</dbReference>
<dbReference type="GO" id="GO:0016887">
    <property type="term" value="F:ATP hydrolysis activity"/>
    <property type="evidence" value="ECO:0007669"/>
    <property type="project" value="InterPro"/>
</dbReference>
<dbReference type="GO" id="GO:0003677">
    <property type="term" value="F:DNA binding"/>
    <property type="evidence" value="ECO:0007669"/>
    <property type="project" value="UniProtKB-UniRule"/>
</dbReference>
<dbReference type="GO" id="GO:0009381">
    <property type="term" value="F:excinuclease ABC activity"/>
    <property type="evidence" value="ECO:0007669"/>
    <property type="project" value="UniProtKB-UniRule"/>
</dbReference>
<dbReference type="GO" id="GO:0004386">
    <property type="term" value="F:helicase activity"/>
    <property type="evidence" value="ECO:0007669"/>
    <property type="project" value="UniProtKB-KW"/>
</dbReference>
<dbReference type="GO" id="GO:0006289">
    <property type="term" value="P:nucleotide-excision repair"/>
    <property type="evidence" value="ECO:0007669"/>
    <property type="project" value="UniProtKB-UniRule"/>
</dbReference>
<dbReference type="GO" id="GO:0009432">
    <property type="term" value="P:SOS response"/>
    <property type="evidence" value="ECO:0007669"/>
    <property type="project" value="UniProtKB-UniRule"/>
</dbReference>
<dbReference type="CDD" id="cd17916">
    <property type="entry name" value="DEXHc_UvrB"/>
    <property type="match status" value="1"/>
</dbReference>
<dbReference type="CDD" id="cd18790">
    <property type="entry name" value="SF2_C_UvrB"/>
    <property type="match status" value="1"/>
</dbReference>
<dbReference type="Gene3D" id="3.40.50.300">
    <property type="entry name" value="P-loop containing nucleotide triphosphate hydrolases"/>
    <property type="match status" value="3"/>
</dbReference>
<dbReference type="Gene3D" id="4.10.860.10">
    <property type="entry name" value="UVR domain"/>
    <property type="match status" value="1"/>
</dbReference>
<dbReference type="HAMAP" id="MF_00204">
    <property type="entry name" value="UvrB"/>
    <property type="match status" value="1"/>
</dbReference>
<dbReference type="InterPro" id="IPR006935">
    <property type="entry name" value="Helicase/UvrB_N"/>
</dbReference>
<dbReference type="InterPro" id="IPR014001">
    <property type="entry name" value="Helicase_ATP-bd"/>
</dbReference>
<dbReference type="InterPro" id="IPR001650">
    <property type="entry name" value="Helicase_C-like"/>
</dbReference>
<dbReference type="InterPro" id="IPR027417">
    <property type="entry name" value="P-loop_NTPase"/>
</dbReference>
<dbReference type="InterPro" id="IPR001943">
    <property type="entry name" value="UVR_dom"/>
</dbReference>
<dbReference type="InterPro" id="IPR036876">
    <property type="entry name" value="UVR_dom_sf"/>
</dbReference>
<dbReference type="InterPro" id="IPR004807">
    <property type="entry name" value="UvrB"/>
</dbReference>
<dbReference type="InterPro" id="IPR041471">
    <property type="entry name" value="UvrB_inter"/>
</dbReference>
<dbReference type="InterPro" id="IPR024759">
    <property type="entry name" value="UvrB_YAD/RRR_dom"/>
</dbReference>
<dbReference type="NCBIfam" id="NF003673">
    <property type="entry name" value="PRK05298.1"/>
    <property type="match status" value="1"/>
</dbReference>
<dbReference type="NCBIfam" id="TIGR00631">
    <property type="entry name" value="uvrb"/>
    <property type="match status" value="1"/>
</dbReference>
<dbReference type="PANTHER" id="PTHR24029">
    <property type="entry name" value="UVRABC SYSTEM PROTEIN B"/>
    <property type="match status" value="1"/>
</dbReference>
<dbReference type="PANTHER" id="PTHR24029:SF0">
    <property type="entry name" value="UVRABC SYSTEM PROTEIN B"/>
    <property type="match status" value="1"/>
</dbReference>
<dbReference type="Pfam" id="PF00271">
    <property type="entry name" value="Helicase_C"/>
    <property type="match status" value="1"/>
</dbReference>
<dbReference type="Pfam" id="PF04851">
    <property type="entry name" value="ResIII"/>
    <property type="match status" value="1"/>
</dbReference>
<dbReference type="Pfam" id="PF02151">
    <property type="entry name" value="UVR"/>
    <property type="match status" value="1"/>
</dbReference>
<dbReference type="Pfam" id="PF12344">
    <property type="entry name" value="UvrB"/>
    <property type="match status" value="1"/>
</dbReference>
<dbReference type="Pfam" id="PF17757">
    <property type="entry name" value="UvrB_inter"/>
    <property type="match status" value="1"/>
</dbReference>
<dbReference type="SMART" id="SM00487">
    <property type="entry name" value="DEXDc"/>
    <property type="match status" value="1"/>
</dbReference>
<dbReference type="SMART" id="SM00490">
    <property type="entry name" value="HELICc"/>
    <property type="match status" value="1"/>
</dbReference>
<dbReference type="SUPFAM" id="SSF46600">
    <property type="entry name" value="C-terminal UvrC-binding domain of UvrB"/>
    <property type="match status" value="1"/>
</dbReference>
<dbReference type="SUPFAM" id="SSF52540">
    <property type="entry name" value="P-loop containing nucleoside triphosphate hydrolases"/>
    <property type="match status" value="2"/>
</dbReference>
<dbReference type="PROSITE" id="PS51192">
    <property type="entry name" value="HELICASE_ATP_BIND_1"/>
    <property type="match status" value="1"/>
</dbReference>
<dbReference type="PROSITE" id="PS51194">
    <property type="entry name" value="HELICASE_CTER"/>
    <property type="match status" value="1"/>
</dbReference>
<dbReference type="PROSITE" id="PS50151">
    <property type="entry name" value="UVR"/>
    <property type="match status" value="1"/>
</dbReference>
<keyword id="KW-0067">ATP-binding</keyword>
<keyword id="KW-0963">Cytoplasm</keyword>
<keyword id="KW-0227">DNA damage</keyword>
<keyword id="KW-0228">DNA excision</keyword>
<keyword id="KW-0234">DNA repair</keyword>
<keyword id="KW-0267">Excision nuclease</keyword>
<keyword id="KW-0347">Helicase</keyword>
<keyword id="KW-0378">Hydrolase</keyword>
<keyword id="KW-0547">Nucleotide-binding</keyword>
<keyword id="KW-0742">SOS response</keyword>
<name>UVRB_STRPZ</name>
<accession>B5XLX7</accession>
<feature type="chain" id="PRO_1000099573" description="UvrABC system protein B">
    <location>
        <begin position="1"/>
        <end position="663"/>
    </location>
</feature>
<feature type="domain" description="Helicase ATP-binding" evidence="1">
    <location>
        <begin position="31"/>
        <end position="271"/>
    </location>
</feature>
<feature type="domain" description="Helicase C-terminal" evidence="1">
    <location>
        <begin position="435"/>
        <end position="601"/>
    </location>
</feature>
<feature type="domain" description="UVR" evidence="1">
    <location>
        <begin position="627"/>
        <end position="662"/>
    </location>
</feature>
<feature type="region of interest" description="Disordered" evidence="2">
    <location>
        <begin position="1"/>
        <end position="23"/>
    </location>
</feature>
<feature type="short sequence motif" description="Beta-hairpin">
    <location>
        <begin position="97"/>
        <end position="120"/>
    </location>
</feature>
<feature type="compositionally biased region" description="Basic and acidic residues" evidence="2">
    <location>
        <begin position="1"/>
        <end position="10"/>
    </location>
</feature>
<feature type="binding site" evidence="1">
    <location>
        <begin position="44"/>
        <end position="51"/>
    </location>
    <ligand>
        <name>ATP</name>
        <dbReference type="ChEBI" id="CHEBI:30616"/>
    </ligand>
</feature>
<comment type="function">
    <text evidence="1">The UvrABC repair system catalyzes the recognition and processing of DNA lesions. A damage recognition complex composed of 2 UvrA and 2 UvrB subunits scans DNA for abnormalities. Upon binding of the UvrA(2)B(2) complex to a putative damaged site, the DNA wraps around one UvrB monomer. DNA wrap is dependent on ATP binding by UvrB and probably causes local melting of the DNA helix, facilitating insertion of UvrB beta-hairpin between the DNA strands. Then UvrB probes one DNA strand for the presence of a lesion. If a lesion is found the UvrA subunits dissociate and the UvrB-DNA preincision complex is formed. This complex is subsequently bound by UvrC and the second UvrB is released. If no lesion is found, the DNA wraps around the other UvrB subunit that will check the other stand for damage.</text>
</comment>
<comment type="subunit">
    <text evidence="1">Forms a heterotetramer with UvrA during the search for lesions. Interacts with UvrC in an incision complex.</text>
</comment>
<comment type="subcellular location">
    <subcellularLocation>
        <location evidence="1">Cytoplasm</location>
    </subcellularLocation>
</comment>
<comment type="domain">
    <text evidence="1">The beta-hairpin motif is involved in DNA binding.</text>
</comment>
<comment type="similarity">
    <text evidence="1">Belongs to the UvrB family.</text>
</comment>
<proteinExistence type="inferred from homology"/>
<organism>
    <name type="scientific">Streptococcus pyogenes serotype M49 (strain NZ131)</name>
    <dbReference type="NCBI Taxonomy" id="471876"/>
    <lineage>
        <taxon>Bacteria</taxon>
        <taxon>Bacillati</taxon>
        <taxon>Bacillota</taxon>
        <taxon>Bacilli</taxon>
        <taxon>Lactobacillales</taxon>
        <taxon>Streptococcaceae</taxon>
        <taxon>Streptococcus</taxon>
    </lineage>
</organism>
<gene>
    <name evidence="1" type="primary">uvrB</name>
    <name type="ordered locus">Spy49_1039c</name>
</gene>
<protein>
    <recommendedName>
        <fullName evidence="1">UvrABC system protein B</fullName>
        <shortName evidence="1">Protein UvrB</shortName>
    </recommendedName>
    <alternativeName>
        <fullName evidence="1">Excinuclease ABC subunit B</fullName>
    </alternativeName>
</protein>